<comment type="function">
    <text evidence="1">Activates KDO (a required 8-carbon sugar) for incorporation into bacterial lipopolysaccharide in Gram-negative bacteria.</text>
</comment>
<comment type="catalytic activity">
    <reaction evidence="1">
        <text>3-deoxy-alpha-D-manno-oct-2-ulosonate + CTP = CMP-3-deoxy-beta-D-manno-octulosonate + diphosphate</text>
        <dbReference type="Rhea" id="RHEA:23448"/>
        <dbReference type="ChEBI" id="CHEBI:33019"/>
        <dbReference type="ChEBI" id="CHEBI:37563"/>
        <dbReference type="ChEBI" id="CHEBI:85986"/>
        <dbReference type="ChEBI" id="CHEBI:85987"/>
        <dbReference type="EC" id="2.7.7.38"/>
    </reaction>
</comment>
<comment type="pathway">
    <text evidence="1">Nucleotide-sugar biosynthesis; CMP-3-deoxy-D-manno-octulosonate biosynthesis; CMP-3-deoxy-D-manno-octulosonate from 3-deoxy-D-manno-octulosonate and CTP: step 1/1.</text>
</comment>
<comment type="pathway">
    <text evidence="1">Bacterial outer membrane biogenesis; lipopolysaccharide biosynthesis.</text>
</comment>
<comment type="subcellular location">
    <subcellularLocation>
        <location evidence="1">Cytoplasm</location>
    </subcellularLocation>
</comment>
<comment type="similarity">
    <text evidence="1">Belongs to the KdsB family.</text>
</comment>
<proteinExistence type="inferred from homology"/>
<sequence length="242" mass="25548">MRHVAVIIPARYGASRFPGKPLADLAGKPLIAHVVERAKRARGVDVVAVATDDDRIARAVRDAGGEAILTGPAATGTDRVAEAARKLAPRPEIVVNLQGDEPLIEPEAIEAVIGAMEGGVRMATLARPLAAGELERTQVVKVVTRASGDALYFSRAPIPHRRAGGESPLARAHVGIYAFTAAFLETFTALAPGRLEGEEALEQLRALEHGYDIRVADTGYRGFGIDTPDDLERARALLAAGA</sequence>
<name>KDSB_ANASK</name>
<reference key="1">
    <citation type="submission" date="2008-08" db="EMBL/GenBank/DDBJ databases">
        <title>Complete sequence of Anaeromyxobacter sp. K.</title>
        <authorList>
            <consortium name="US DOE Joint Genome Institute"/>
            <person name="Lucas S."/>
            <person name="Copeland A."/>
            <person name="Lapidus A."/>
            <person name="Glavina del Rio T."/>
            <person name="Dalin E."/>
            <person name="Tice H."/>
            <person name="Bruce D."/>
            <person name="Goodwin L."/>
            <person name="Pitluck S."/>
            <person name="Saunders E."/>
            <person name="Brettin T."/>
            <person name="Detter J.C."/>
            <person name="Han C."/>
            <person name="Larimer F."/>
            <person name="Land M."/>
            <person name="Hauser L."/>
            <person name="Kyrpides N."/>
            <person name="Ovchinnikiva G."/>
            <person name="Beliaev A."/>
        </authorList>
    </citation>
    <scope>NUCLEOTIDE SEQUENCE [LARGE SCALE GENOMIC DNA]</scope>
    <source>
        <strain>K</strain>
    </source>
</reference>
<dbReference type="EC" id="2.7.7.38" evidence="1"/>
<dbReference type="EMBL" id="CP001131">
    <property type="protein sequence ID" value="ACG75509.1"/>
    <property type="molecule type" value="Genomic_DNA"/>
</dbReference>
<dbReference type="RefSeq" id="WP_012528261.1">
    <property type="nucleotide sequence ID" value="NC_011145.1"/>
</dbReference>
<dbReference type="SMR" id="B4UIT7"/>
<dbReference type="KEGG" id="ank:AnaeK_4306"/>
<dbReference type="HOGENOM" id="CLU_065038_0_1_7"/>
<dbReference type="OrthoDB" id="9815559at2"/>
<dbReference type="UniPathway" id="UPA00030"/>
<dbReference type="UniPathway" id="UPA00358">
    <property type="reaction ID" value="UER00476"/>
</dbReference>
<dbReference type="Proteomes" id="UP000001871">
    <property type="component" value="Chromosome"/>
</dbReference>
<dbReference type="GO" id="GO:0005829">
    <property type="term" value="C:cytosol"/>
    <property type="evidence" value="ECO:0007669"/>
    <property type="project" value="TreeGrafter"/>
</dbReference>
<dbReference type="GO" id="GO:0008690">
    <property type="term" value="F:3-deoxy-manno-octulosonate cytidylyltransferase activity"/>
    <property type="evidence" value="ECO:0007669"/>
    <property type="project" value="UniProtKB-UniRule"/>
</dbReference>
<dbReference type="GO" id="GO:0033468">
    <property type="term" value="P:CMP-keto-3-deoxy-D-manno-octulosonic acid biosynthetic process"/>
    <property type="evidence" value="ECO:0007669"/>
    <property type="project" value="UniProtKB-UniRule"/>
</dbReference>
<dbReference type="GO" id="GO:0009103">
    <property type="term" value="P:lipopolysaccharide biosynthetic process"/>
    <property type="evidence" value="ECO:0007669"/>
    <property type="project" value="UniProtKB-UniRule"/>
</dbReference>
<dbReference type="CDD" id="cd02517">
    <property type="entry name" value="CMP-KDO-Synthetase"/>
    <property type="match status" value="1"/>
</dbReference>
<dbReference type="FunFam" id="3.90.550.10:FF:000011">
    <property type="entry name" value="3-deoxy-manno-octulosonate cytidylyltransferase"/>
    <property type="match status" value="1"/>
</dbReference>
<dbReference type="Gene3D" id="3.90.550.10">
    <property type="entry name" value="Spore Coat Polysaccharide Biosynthesis Protein SpsA, Chain A"/>
    <property type="match status" value="1"/>
</dbReference>
<dbReference type="HAMAP" id="MF_00057">
    <property type="entry name" value="KdsB"/>
    <property type="match status" value="1"/>
</dbReference>
<dbReference type="InterPro" id="IPR003329">
    <property type="entry name" value="Cytidylyl_trans"/>
</dbReference>
<dbReference type="InterPro" id="IPR004528">
    <property type="entry name" value="KdsB"/>
</dbReference>
<dbReference type="InterPro" id="IPR029044">
    <property type="entry name" value="Nucleotide-diphossugar_trans"/>
</dbReference>
<dbReference type="NCBIfam" id="TIGR00466">
    <property type="entry name" value="kdsB"/>
    <property type="match status" value="1"/>
</dbReference>
<dbReference type="NCBIfam" id="NF003950">
    <property type="entry name" value="PRK05450.1-3"/>
    <property type="match status" value="1"/>
</dbReference>
<dbReference type="NCBIfam" id="NF003952">
    <property type="entry name" value="PRK05450.1-5"/>
    <property type="match status" value="1"/>
</dbReference>
<dbReference type="NCBIfam" id="NF009905">
    <property type="entry name" value="PRK13368.1"/>
    <property type="match status" value="1"/>
</dbReference>
<dbReference type="PANTHER" id="PTHR42866">
    <property type="entry name" value="3-DEOXY-MANNO-OCTULOSONATE CYTIDYLYLTRANSFERASE"/>
    <property type="match status" value="1"/>
</dbReference>
<dbReference type="PANTHER" id="PTHR42866:SF2">
    <property type="entry name" value="3-DEOXY-MANNO-OCTULOSONATE CYTIDYLYLTRANSFERASE, MITOCHONDRIAL"/>
    <property type="match status" value="1"/>
</dbReference>
<dbReference type="Pfam" id="PF02348">
    <property type="entry name" value="CTP_transf_3"/>
    <property type="match status" value="1"/>
</dbReference>
<dbReference type="SUPFAM" id="SSF53448">
    <property type="entry name" value="Nucleotide-diphospho-sugar transferases"/>
    <property type="match status" value="1"/>
</dbReference>
<organism>
    <name type="scientific">Anaeromyxobacter sp. (strain K)</name>
    <dbReference type="NCBI Taxonomy" id="447217"/>
    <lineage>
        <taxon>Bacteria</taxon>
        <taxon>Pseudomonadati</taxon>
        <taxon>Myxococcota</taxon>
        <taxon>Myxococcia</taxon>
        <taxon>Myxococcales</taxon>
        <taxon>Cystobacterineae</taxon>
        <taxon>Anaeromyxobacteraceae</taxon>
        <taxon>Anaeromyxobacter</taxon>
    </lineage>
</organism>
<protein>
    <recommendedName>
        <fullName evidence="1">3-deoxy-manno-octulosonate cytidylyltransferase</fullName>
        <ecNumber evidence="1">2.7.7.38</ecNumber>
    </recommendedName>
    <alternativeName>
        <fullName evidence="1">CMP-2-keto-3-deoxyoctulosonic acid synthase</fullName>
        <shortName evidence="1">CKS</shortName>
        <shortName evidence="1">CMP-KDO synthase</shortName>
    </alternativeName>
</protein>
<evidence type="ECO:0000255" key="1">
    <source>
        <dbReference type="HAMAP-Rule" id="MF_00057"/>
    </source>
</evidence>
<accession>B4UIT7</accession>
<keyword id="KW-0963">Cytoplasm</keyword>
<keyword id="KW-0448">Lipopolysaccharide biosynthesis</keyword>
<keyword id="KW-0548">Nucleotidyltransferase</keyword>
<keyword id="KW-0808">Transferase</keyword>
<feature type="chain" id="PRO_1000091858" description="3-deoxy-manno-octulosonate cytidylyltransferase">
    <location>
        <begin position="1"/>
        <end position="242"/>
    </location>
</feature>
<gene>
    <name evidence="1" type="primary">kdsB</name>
    <name type="ordered locus">AnaeK_4306</name>
</gene>